<organism>
    <name type="scientific">Kribbella flavida (strain DSM 17836 / JCM 10339 / NBRC 14399)</name>
    <dbReference type="NCBI Taxonomy" id="479435"/>
    <lineage>
        <taxon>Bacteria</taxon>
        <taxon>Bacillati</taxon>
        <taxon>Actinomycetota</taxon>
        <taxon>Actinomycetes</taxon>
        <taxon>Propionibacteriales</taxon>
        <taxon>Kribbellaceae</taxon>
        <taxon>Kribbella</taxon>
    </lineage>
</organism>
<sequence length="279" mass="29410">MTFDASGRLPEAFLTPGGSSFMDFLAGHAPDLLPGRRSLGTGDLSKDVPHGTTIVAATFDGGVVMAGDRRATMGNIIAQRDIEKVFPADEYSCVGIAGSAGLAIEMVRLFQVELEHYEKLEGTTLSLDGKANRLSALIRGNLAMAMQGLAVVPLFAGYDHDISGGRIFSYDPTGGRYEEQAFHSVGSGSLFARGSLKKLYRESMSAAECVTATIQALYDAADDDSATGGPDMARRIFPVIGVVTADGYQRMPEAEVGEIVDSVVGARLQRPDGPAAPLS</sequence>
<protein>
    <recommendedName>
        <fullName evidence="1">Proteasome subunit beta</fullName>
        <ecNumber evidence="1">3.4.25.1</ecNumber>
    </recommendedName>
    <alternativeName>
        <fullName evidence="1">20S proteasome beta subunit</fullName>
    </alternativeName>
    <alternativeName>
        <fullName evidence="1">Proteasome core protein PrcB</fullName>
    </alternativeName>
</protein>
<proteinExistence type="inferred from homology"/>
<gene>
    <name evidence="1" type="primary">prcB</name>
    <name type="ordered locus">Kfla_3226</name>
</gene>
<reference key="1">
    <citation type="submission" date="2009-09" db="EMBL/GenBank/DDBJ databases">
        <title>The complete genome of Kribbella flavida DSM 17836.</title>
        <authorList>
            <consortium name="US DOE Joint Genome Institute (JGI-PGF)"/>
            <person name="Lucas S."/>
            <person name="Copeland A."/>
            <person name="Lapidus A."/>
            <person name="Glavina del Rio T."/>
            <person name="Dalin E."/>
            <person name="Tice H."/>
            <person name="Bruce D."/>
            <person name="Goodwin L."/>
            <person name="Pitluck S."/>
            <person name="Kyrpides N."/>
            <person name="Mavromatis K."/>
            <person name="Ivanova N."/>
            <person name="Saunders E."/>
            <person name="Brettin T."/>
            <person name="Detter J.C."/>
            <person name="Han C."/>
            <person name="Larimer F."/>
            <person name="Land M."/>
            <person name="Hauser L."/>
            <person name="Markowitz V."/>
            <person name="Cheng J.-F."/>
            <person name="Hugenholtz P."/>
            <person name="Woyke T."/>
            <person name="Wu D."/>
            <person name="Pukall R."/>
            <person name="Klenk H.-P."/>
            <person name="Eisen J.A."/>
        </authorList>
    </citation>
    <scope>NUCLEOTIDE SEQUENCE [LARGE SCALE GENOMIC DNA]</scope>
    <source>
        <strain>DSM 17836 / JCM 10339 / NBRC 14399</strain>
    </source>
</reference>
<feature type="propeptide" id="PRO_0000397518" description="Removed in mature form; by autocatalysis" evidence="1">
    <location>
        <begin position="1"/>
        <end position="51"/>
    </location>
</feature>
<feature type="chain" id="PRO_0000397519" description="Proteasome subunit beta">
    <location>
        <begin position="52"/>
        <end position="279"/>
    </location>
</feature>
<feature type="active site" description="Nucleophile" evidence="1">
    <location>
        <position position="52"/>
    </location>
</feature>
<name>PSB_KRIFD</name>
<comment type="function">
    <text evidence="1">Component of the proteasome core, a large protease complex with broad specificity involved in protein degradation.</text>
</comment>
<comment type="catalytic activity">
    <reaction evidence="1">
        <text>Cleavage of peptide bonds with very broad specificity.</text>
        <dbReference type="EC" id="3.4.25.1"/>
    </reaction>
</comment>
<comment type="activity regulation">
    <text evidence="1">The formation of the proteasomal ATPase ARC-20S proteasome complex, likely via the docking of the C-termini of ARC into the intersubunit pockets in the alpha-rings, may trigger opening of the gate for substrate entry. Interconversion between the open-gate and close-gate conformations leads to a dynamic regulation of the 20S proteasome proteolysis activity.</text>
</comment>
<comment type="pathway">
    <text evidence="1">Protein degradation; proteasomal Pup-dependent pathway.</text>
</comment>
<comment type="subunit">
    <text evidence="1">The 20S proteasome core is composed of 14 alpha and 14 beta subunits that assemble into four stacked heptameric rings, resulting in a barrel-shaped structure. The two inner rings, each composed of seven catalytic beta subunits, are sandwiched by two outer rings, each composed of seven alpha subunits. The catalytic chamber with the active sites is on the inside of the barrel. Has a gated structure, the ends of the cylinder being occluded by the N-termini of the alpha-subunits. Is capped by the proteasome-associated ATPase, ARC.</text>
</comment>
<comment type="subcellular location">
    <subcellularLocation>
        <location evidence="1">Cytoplasm</location>
    </subcellularLocation>
</comment>
<comment type="similarity">
    <text evidence="1">Belongs to the peptidase T1B family.</text>
</comment>
<accession>D2Q4H4</accession>
<evidence type="ECO:0000255" key="1">
    <source>
        <dbReference type="HAMAP-Rule" id="MF_02113"/>
    </source>
</evidence>
<dbReference type="EC" id="3.4.25.1" evidence="1"/>
<dbReference type="EMBL" id="CP001736">
    <property type="protein sequence ID" value="ADB32288.1"/>
    <property type="molecule type" value="Genomic_DNA"/>
</dbReference>
<dbReference type="RefSeq" id="WP_012920844.1">
    <property type="nucleotide sequence ID" value="NC_013729.1"/>
</dbReference>
<dbReference type="SMR" id="D2Q4H4"/>
<dbReference type="STRING" id="479435.Kfla_3226"/>
<dbReference type="MEROPS" id="T01.005"/>
<dbReference type="KEGG" id="kfl:Kfla_3226"/>
<dbReference type="eggNOG" id="COG0638">
    <property type="taxonomic scope" value="Bacteria"/>
</dbReference>
<dbReference type="HOGENOM" id="CLU_035750_2_0_11"/>
<dbReference type="OrthoDB" id="5174038at2"/>
<dbReference type="UniPathway" id="UPA00997"/>
<dbReference type="Proteomes" id="UP000007967">
    <property type="component" value="Chromosome"/>
</dbReference>
<dbReference type="GO" id="GO:0005737">
    <property type="term" value="C:cytoplasm"/>
    <property type="evidence" value="ECO:0007669"/>
    <property type="project" value="UniProtKB-SubCell"/>
</dbReference>
<dbReference type="GO" id="GO:0019774">
    <property type="term" value="C:proteasome core complex, beta-subunit complex"/>
    <property type="evidence" value="ECO:0007669"/>
    <property type="project" value="UniProtKB-UniRule"/>
</dbReference>
<dbReference type="GO" id="GO:0004298">
    <property type="term" value="F:threonine-type endopeptidase activity"/>
    <property type="evidence" value="ECO:0007669"/>
    <property type="project" value="UniProtKB-UniRule"/>
</dbReference>
<dbReference type="GO" id="GO:0019941">
    <property type="term" value="P:modification-dependent protein catabolic process"/>
    <property type="evidence" value="ECO:0007669"/>
    <property type="project" value="UniProtKB-UniRule"/>
</dbReference>
<dbReference type="GO" id="GO:0010498">
    <property type="term" value="P:proteasomal protein catabolic process"/>
    <property type="evidence" value="ECO:0007669"/>
    <property type="project" value="UniProtKB-UniRule"/>
</dbReference>
<dbReference type="CDD" id="cd01906">
    <property type="entry name" value="proteasome_protease_HslV"/>
    <property type="match status" value="1"/>
</dbReference>
<dbReference type="Gene3D" id="3.60.20.10">
    <property type="entry name" value="Glutamine Phosphoribosylpyrophosphate, subunit 1, domain 1"/>
    <property type="match status" value="1"/>
</dbReference>
<dbReference type="HAMAP" id="MF_02113_B">
    <property type="entry name" value="Proteasome_B_B"/>
    <property type="match status" value="1"/>
</dbReference>
<dbReference type="InterPro" id="IPR029055">
    <property type="entry name" value="Ntn_hydrolases_N"/>
</dbReference>
<dbReference type="InterPro" id="IPR000243">
    <property type="entry name" value="Pept_T1A_subB"/>
</dbReference>
<dbReference type="InterPro" id="IPR001353">
    <property type="entry name" value="Proteasome_sua/b"/>
</dbReference>
<dbReference type="InterPro" id="IPR023333">
    <property type="entry name" value="Proteasome_suB-type"/>
</dbReference>
<dbReference type="InterPro" id="IPR022483">
    <property type="entry name" value="PSB_actinobac"/>
</dbReference>
<dbReference type="NCBIfam" id="TIGR03690">
    <property type="entry name" value="20S_bact_beta"/>
    <property type="match status" value="1"/>
</dbReference>
<dbReference type="PANTHER" id="PTHR32194:SF0">
    <property type="entry name" value="ATP-DEPENDENT PROTEASE SUBUNIT HSLV"/>
    <property type="match status" value="1"/>
</dbReference>
<dbReference type="PANTHER" id="PTHR32194">
    <property type="entry name" value="METALLOPROTEASE TLDD"/>
    <property type="match status" value="1"/>
</dbReference>
<dbReference type="Pfam" id="PF00227">
    <property type="entry name" value="Proteasome"/>
    <property type="match status" value="1"/>
</dbReference>
<dbReference type="PRINTS" id="PR00141">
    <property type="entry name" value="PROTEASOME"/>
</dbReference>
<dbReference type="SUPFAM" id="SSF56235">
    <property type="entry name" value="N-terminal nucleophile aminohydrolases (Ntn hydrolases)"/>
    <property type="match status" value="1"/>
</dbReference>
<dbReference type="PROSITE" id="PS51476">
    <property type="entry name" value="PROTEASOME_BETA_2"/>
    <property type="match status" value="1"/>
</dbReference>
<keyword id="KW-0068">Autocatalytic cleavage</keyword>
<keyword id="KW-0963">Cytoplasm</keyword>
<keyword id="KW-0378">Hydrolase</keyword>
<keyword id="KW-0645">Protease</keyword>
<keyword id="KW-0647">Proteasome</keyword>
<keyword id="KW-1185">Reference proteome</keyword>
<keyword id="KW-0888">Threonine protease</keyword>
<keyword id="KW-0865">Zymogen</keyword>